<keyword id="KW-0064">Aspartyl protease</keyword>
<keyword id="KW-1015">Disulfide bond</keyword>
<keyword id="KW-0325">Glycoprotein</keyword>
<keyword id="KW-0378">Hydrolase</keyword>
<keyword id="KW-0645">Protease</keyword>
<keyword id="KW-1185">Reference proteome</keyword>
<keyword id="KW-0964">Secreted</keyword>
<keyword id="KW-0732">Signal</keyword>
<keyword id="KW-0865">Zymogen</keyword>
<evidence type="ECO:0000250" key="1">
    <source>
        <dbReference type="UniProtKB" id="Q12567"/>
    </source>
</evidence>
<evidence type="ECO:0000255" key="2"/>
<evidence type="ECO:0000255" key="3">
    <source>
        <dbReference type="PROSITE-ProRule" id="PRU00498"/>
    </source>
</evidence>
<evidence type="ECO:0000255" key="4">
    <source>
        <dbReference type="PROSITE-ProRule" id="PRU01103"/>
    </source>
</evidence>
<evidence type="ECO:0000305" key="5"/>
<feature type="signal peptide" evidence="2">
    <location>
        <begin position="1"/>
        <end position="20"/>
    </location>
</feature>
<feature type="propeptide" id="PRO_0000407037" description="Activation peptide" evidence="1">
    <location>
        <begin position="21"/>
        <end position="67"/>
    </location>
</feature>
<feature type="chain" id="PRO_0000407038" description="Aspartic protease pepA">
    <location>
        <begin position="68"/>
        <end position="403"/>
    </location>
</feature>
<feature type="domain" description="Peptidase A1" evidence="4">
    <location>
        <begin position="82"/>
        <end position="400"/>
    </location>
</feature>
<feature type="active site" evidence="4">
    <location>
        <position position="98"/>
    </location>
</feature>
<feature type="active site" evidence="4">
    <location>
        <position position="293"/>
    </location>
</feature>
<feature type="glycosylation site" description="N-linked (GlcNAc...) asparagine" evidence="3">
    <location>
        <position position="270"/>
    </location>
</feature>
<feature type="disulfide bond" evidence="4">
    <location>
        <begin position="329"/>
        <end position="362"/>
    </location>
</feature>
<organism>
    <name type="scientific">Arthroderma gypseum (strain ATCC MYA-4604 / CBS 118893)</name>
    <name type="common">Microsporum gypseum</name>
    <dbReference type="NCBI Taxonomy" id="535722"/>
    <lineage>
        <taxon>Eukaryota</taxon>
        <taxon>Fungi</taxon>
        <taxon>Dikarya</taxon>
        <taxon>Ascomycota</taxon>
        <taxon>Pezizomycotina</taxon>
        <taxon>Eurotiomycetes</taxon>
        <taxon>Eurotiomycetidae</taxon>
        <taxon>Onygenales</taxon>
        <taxon>Arthrodermataceae</taxon>
        <taxon>Nannizzia</taxon>
    </lineage>
</organism>
<protein>
    <recommendedName>
        <fullName evidence="5">Aspartic protease pepA</fullName>
        <ecNumber>3.4.23.-</ecNumber>
    </recommendedName>
</protein>
<name>PEPA_ARTGP</name>
<gene>
    <name type="ORF">MGYG_00710</name>
</gene>
<reference key="1">
    <citation type="journal article" date="2012" name="MBio">
        <title>Comparative genome analysis of Trichophyton rubrum and related dermatophytes reveals candidate genes involved in infection.</title>
        <authorList>
            <person name="Martinez D.A."/>
            <person name="Oliver B.G."/>
            <person name="Graeser Y."/>
            <person name="Goldberg J.M."/>
            <person name="Li W."/>
            <person name="Martinez-Rossi N.M."/>
            <person name="Monod M."/>
            <person name="Shelest E."/>
            <person name="Barton R.C."/>
            <person name="Birch E."/>
            <person name="Brakhage A.A."/>
            <person name="Chen Z."/>
            <person name="Gurr S.J."/>
            <person name="Heiman D."/>
            <person name="Heitman J."/>
            <person name="Kosti I."/>
            <person name="Rossi A."/>
            <person name="Saif S."/>
            <person name="Samalova M."/>
            <person name="Saunders C.W."/>
            <person name="Shea T."/>
            <person name="Summerbell R.C."/>
            <person name="Xu J."/>
            <person name="Young S."/>
            <person name="Zeng Q."/>
            <person name="Birren B.W."/>
            <person name="Cuomo C.A."/>
            <person name="White T.C."/>
        </authorList>
    </citation>
    <scope>NUCLEOTIDE SEQUENCE [LARGE SCALE GENOMIC DNA]</scope>
    <source>
        <strain>ATCC MYA-4604 / CBS 118893</strain>
    </source>
</reference>
<comment type="function">
    <text evidence="1">Secreted aspartic endopeptidase that allows assimilation of proteinaceous substrates. The scissile peptide bond is attacked by a nucleophilic water molecule activated by two aspartic residues in the active site. Shows a broad primary substrate specificity. Favors hydrophobic residues at the P1 and P1' positions.</text>
</comment>
<comment type="subunit">
    <text evidence="1">Monomer.</text>
</comment>
<comment type="subcellular location">
    <subcellularLocation>
        <location evidence="1">Secreted</location>
    </subcellularLocation>
</comment>
<comment type="similarity">
    <text evidence="4">Belongs to the peptidase A1 family.</text>
</comment>
<accession>E5R1B9</accession>
<sequence length="403" mass="42821">MVLITQLGAALAVFSALTVAAPTKGKARFSAPQVGIPKKAKHHPAAAYARALHKFGMKIPKAVSDAAKGSVPTTPTQNDEQYVTQVTVGGSTLNLDLDTGSADLWVFSTETPQDESQGHNIYKPSSGAKRLDGYSWEIKYGDSSSAHGDVFLDTVTVGGVTTSSQAVESAKEVSSQFVKDKATDGLMGLSFSVLNTVQPQPQKTFFDNVLSQLEQPLFTCTLKHGEPGTYDFGYIDDSKHTGEIAYTQVDNSNGWWGFTADGYSIGGGSNSSYSLYGAQHKRANGGSISGIADTGTTLMLLSDDVVGDYYQNVQGATQDQMQGGWVFPCDANLPDFILNIGGYNAVVPGKFMNFQEIDNSMCFGGLQSSGGGSTPNIFGDVFLKSQFVVWDTQGPRIGFAPQA</sequence>
<proteinExistence type="inferred from homology"/>
<dbReference type="EC" id="3.4.23.-"/>
<dbReference type="EMBL" id="DS989822">
    <property type="protein sequence ID" value="EFQ97670.1"/>
    <property type="molecule type" value="Genomic_DNA"/>
</dbReference>
<dbReference type="RefSeq" id="XP_003176622.1">
    <property type="nucleotide sequence ID" value="XM_003176574.1"/>
</dbReference>
<dbReference type="SMR" id="E5R1B9"/>
<dbReference type="STRING" id="535722.E5R1B9"/>
<dbReference type="GeneID" id="10031942"/>
<dbReference type="VEuPathDB" id="FungiDB:MGYG_00710"/>
<dbReference type="eggNOG" id="KOG1339">
    <property type="taxonomic scope" value="Eukaryota"/>
</dbReference>
<dbReference type="HOGENOM" id="CLU_013253_0_1_1"/>
<dbReference type="InParanoid" id="E5R1B9"/>
<dbReference type="OMA" id="DEEYIGN"/>
<dbReference type="OrthoDB" id="2747330at2759"/>
<dbReference type="Proteomes" id="UP000002669">
    <property type="component" value="Unassembled WGS sequence"/>
</dbReference>
<dbReference type="GO" id="GO:0005576">
    <property type="term" value="C:extracellular region"/>
    <property type="evidence" value="ECO:0007669"/>
    <property type="project" value="UniProtKB-SubCell"/>
</dbReference>
<dbReference type="GO" id="GO:0004190">
    <property type="term" value="F:aspartic-type endopeptidase activity"/>
    <property type="evidence" value="ECO:0007669"/>
    <property type="project" value="UniProtKB-KW"/>
</dbReference>
<dbReference type="GO" id="GO:0006508">
    <property type="term" value="P:proteolysis"/>
    <property type="evidence" value="ECO:0007669"/>
    <property type="project" value="UniProtKB-KW"/>
</dbReference>
<dbReference type="CDD" id="cd06097">
    <property type="entry name" value="Aspergillopepsin_like"/>
    <property type="match status" value="1"/>
</dbReference>
<dbReference type="FunFam" id="2.40.70.10:FF:000024">
    <property type="entry name" value="Endothiapepsin"/>
    <property type="match status" value="1"/>
</dbReference>
<dbReference type="FunFam" id="2.40.70.10:FF:000026">
    <property type="entry name" value="Endothiapepsin"/>
    <property type="match status" value="1"/>
</dbReference>
<dbReference type="Gene3D" id="2.40.70.10">
    <property type="entry name" value="Acid Proteases"/>
    <property type="match status" value="2"/>
</dbReference>
<dbReference type="InterPro" id="IPR001461">
    <property type="entry name" value="Aspartic_peptidase_A1"/>
</dbReference>
<dbReference type="InterPro" id="IPR001969">
    <property type="entry name" value="Aspartic_peptidase_AS"/>
</dbReference>
<dbReference type="InterPro" id="IPR034163">
    <property type="entry name" value="Aspergillopepsin-like_cat_dom"/>
</dbReference>
<dbReference type="InterPro" id="IPR033121">
    <property type="entry name" value="PEPTIDASE_A1"/>
</dbReference>
<dbReference type="InterPro" id="IPR021109">
    <property type="entry name" value="Peptidase_aspartic_dom_sf"/>
</dbReference>
<dbReference type="PANTHER" id="PTHR47966:SF2">
    <property type="entry name" value="ASPERGILLOPEPSIN-1-RELATED"/>
    <property type="match status" value="1"/>
</dbReference>
<dbReference type="PANTHER" id="PTHR47966">
    <property type="entry name" value="BETA-SITE APP-CLEAVING ENZYME, ISOFORM A-RELATED"/>
    <property type="match status" value="1"/>
</dbReference>
<dbReference type="Pfam" id="PF00026">
    <property type="entry name" value="Asp"/>
    <property type="match status" value="1"/>
</dbReference>
<dbReference type="PRINTS" id="PR00792">
    <property type="entry name" value="PEPSIN"/>
</dbReference>
<dbReference type="SUPFAM" id="SSF50630">
    <property type="entry name" value="Acid proteases"/>
    <property type="match status" value="1"/>
</dbReference>
<dbReference type="PROSITE" id="PS00141">
    <property type="entry name" value="ASP_PROTEASE"/>
    <property type="match status" value="2"/>
</dbReference>
<dbReference type="PROSITE" id="PS51767">
    <property type="entry name" value="PEPTIDASE_A1"/>
    <property type="match status" value="1"/>
</dbReference>